<comment type="function">
    <text evidence="2">Key enzyme in myo-inositol biosynthesis pathway that catalyzes the conversion of glucose 6-phosphate to 1-myo-inositol 1-phosphate in a NAD-dependent manner.</text>
</comment>
<comment type="catalytic activity">
    <reaction evidence="2">
        <text>D-glucose 6-phosphate = 1D-myo-inositol 3-phosphate</text>
        <dbReference type="Rhea" id="RHEA:10716"/>
        <dbReference type="ChEBI" id="CHEBI:58401"/>
        <dbReference type="ChEBI" id="CHEBI:61548"/>
        <dbReference type="EC" id="5.5.1.4"/>
    </reaction>
</comment>
<comment type="cofactor">
    <cofactor evidence="2">
        <name>NAD(+)</name>
        <dbReference type="ChEBI" id="CHEBI:57540"/>
    </cofactor>
</comment>
<comment type="pathway">
    <text>Polyol metabolism; myo-inositol biosynthesis; myo-inositol from D-glucose 6-phosphate: step 1/2.</text>
</comment>
<comment type="subcellular location">
    <subcellularLocation>
        <location evidence="2">Cytoplasm</location>
        <location evidence="2">Cytosol</location>
    </subcellularLocation>
    <subcellularLocation>
        <location evidence="2">Nucleus</location>
    </subcellularLocation>
</comment>
<comment type="similarity">
    <text evidence="3">Belongs to the myo-inositol 1-phosphate synthase family.</text>
</comment>
<dbReference type="EC" id="5.5.1.4" evidence="2"/>
<dbReference type="EMBL" id="AF056326">
    <property type="protein sequence ID" value="AAC15756.1"/>
    <property type="molecule type" value="mRNA"/>
</dbReference>
<dbReference type="EMBL" id="AF323175">
    <property type="protein sequence ID" value="AAG40328.1"/>
    <property type="molecule type" value="Genomic_DNA"/>
</dbReference>
<dbReference type="PIR" id="T01647">
    <property type="entry name" value="T01647"/>
</dbReference>
<dbReference type="RefSeq" id="NP_001105552.1">
    <property type="nucleotide sequence ID" value="NM_001112082.1"/>
</dbReference>
<dbReference type="SMR" id="Q9FPK7"/>
<dbReference type="FunCoup" id="Q9FPK7">
    <property type="interactions" value="2377"/>
</dbReference>
<dbReference type="STRING" id="4577.Q9FPK7"/>
<dbReference type="PaxDb" id="4577-GRMZM2G155242_P01"/>
<dbReference type="GeneID" id="542540"/>
<dbReference type="KEGG" id="zma:542540"/>
<dbReference type="eggNOG" id="KOG0693">
    <property type="taxonomic scope" value="Eukaryota"/>
</dbReference>
<dbReference type="InParanoid" id="Q9FPK7"/>
<dbReference type="OrthoDB" id="2887at2759"/>
<dbReference type="BioCyc" id="MetaCyc:MONOMER-10801"/>
<dbReference type="BRENDA" id="5.5.1.4">
    <property type="organism ID" value="6752"/>
</dbReference>
<dbReference type="UniPathway" id="UPA00823">
    <property type="reaction ID" value="UER00787"/>
</dbReference>
<dbReference type="Proteomes" id="UP000007305">
    <property type="component" value="Unplaced"/>
</dbReference>
<dbReference type="ExpressionAtlas" id="Q9FPK7">
    <property type="expression patterns" value="baseline and differential"/>
</dbReference>
<dbReference type="GO" id="GO:0005737">
    <property type="term" value="C:cytoplasm"/>
    <property type="evidence" value="ECO:0000318"/>
    <property type="project" value="GO_Central"/>
</dbReference>
<dbReference type="GO" id="GO:0005829">
    <property type="term" value="C:cytosol"/>
    <property type="evidence" value="ECO:0007669"/>
    <property type="project" value="UniProtKB-SubCell"/>
</dbReference>
<dbReference type="GO" id="GO:0005634">
    <property type="term" value="C:nucleus"/>
    <property type="evidence" value="ECO:0007669"/>
    <property type="project" value="UniProtKB-SubCell"/>
</dbReference>
<dbReference type="GO" id="GO:0004512">
    <property type="term" value="F:inositol-3-phosphate synthase activity"/>
    <property type="evidence" value="ECO:0000318"/>
    <property type="project" value="GO_Central"/>
</dbReference>
<dbReference type="GO" id="GO:0006021">
    <property type="term" value="P:inositol biosynthetic process"/>
    <property type="evidence" value="ECO:0000318"/>
    <property type="project" value="GO_Central"/>
</dbReference>
<dbReference type="GO" id="GO:0008654">
    <property type="term" value="P:phospholipid biosynthetic process"/>
    <property type="evidence" value="ECO:0007669"/>
    <property type="project" value="UniProtKB-KW"/>
</dbReference>
<dbReference type="FunFam" id="3.30.360.10:FF:000040">
    <property type="entry name" value="Inositol 1-phosphate synthase"/>
    <property type="match status" value="1"/>
</dbReference>
<dbReference type="FunFam" id="3.40.50.720:FF:000107">
    <property type="entry name" value="inositol-3-phosphate synthase"/>
    <property type="match status" value="1"/>
</dbReference>
<dbReference type="FunFam" id="3.40.50.720:FF:000069">
    <property type="entry name" value="Inositol-3-phosphate synthase 1"/>
    <property type="match status" value="1"/>
</dbReference>
<dbReference type="Gene3D" id="3.40.50.720">
    <property type="entry name" value="NAD(P)-binding Rossmann-like Domain"/>
    <property type="match status" value="2"/>
</dbReference>
<dbReference type="InterPro" id="IPR002587">
    <property type="entry name" value="Myo-inos-1-P_Synthase"/>
</dbReference>
<dbReference type="InterPro" id="IPR013021">
    <property type="entry name" value="Myo-inos-1-P_Synthase_GAPDH"/>
</dbReference>
<dbReference type="InterPro" id="IPR036291">
    <property type="entry name" value="NAD(P)-bd_dom_sf"/>
</dbReference>
<dbReference type="PANTHER" id="PTHR11510">
    <property type="entry name" value="MYO-INOSITOL-1 PHOSPHATE SYNTHASE"/>
    <property type="match status" value="1"/>
</dbReference>
<dbReference type="Pfam" id="PF01658">
    <property type="entry name" value="Inos-1-P_synth"/>
    <property type="match status" value="1"/>
</dbReference>
<dbReference type="Pfam" id="PF07994">
    <property type="entry name" value="NAD_binding_5"/>
    <property type="match status" value="1"/>
</dbReference>
<dbReference type="PIRSF" id="PIRSF015578">
    <property type="entry name" value="Myoinos-ppht_syn"/>
    <property type="match status" value="1"/>
</dbReference>
<dbReference type="SUPFAM" id="SSF55347">
    <property type="entry name" value="Glyceraldehyde-3-phosphate dehydrogenase-like, C-terminal domain"/>
    <property type="match status" value="1"/>
</dbReference>
<dbReference type="SUPFAM" id="SSF51735">
    <property type="entry name" value="NAD(P)-binding Rossmann-fold domains"/>
    <property type="match status" value="1"/>
</dbReference>
<organism>
    <name type="scientific">Zea mays</name>
    <name type="common">Maize</name>
    <dbReference type="NCBI Taxonomy" id="4577"/>
    <lineage>
        <taxon>Eukaryota</taxon>
        <taxon>Viridiplantae</taxon>
        <taxon>Streptophyta</taxon>
        <taxon>Embryophyta</taxon>
        <taxon>Tracheophyta</taxon>
        <taxon>Spermatophyta</taxon>
        <taxon>Magnoliopsida</taxon>
        <taxon>Liliopsida</taxon>
        <taxon>Poales</taxon>
        <taxon>Poaceae</taxon>
        <taxon>PACMAD clade</taxon>
        <taxon>Panicoideae</taxon>
        <taxon>Andropogonodae</taxon>
        <taxon>Andropogoneae</taxon>
        <taxon>Tripsacinae</taxon>
        <taxon>Zea</taxon>
    </lineage>
</organism>
<sequence length="510" mass="56245">MFIESFRVESPHVRYGPMEIESEYRYDTTELVHEGKDGASRWVVRPKSVKYNFRTRTAVPKLGVMLVGWGGNNGSTLTAGVIANREGISWATKDKVQQANYYGSLTQASTIRVGSYNGEEIYAPFKSLLPMVNPDDIVFGGWDISNMNLADSMTRAKVLDIDLQKQLRPYMESMVPLPGIYDPDFIAANQGSRANSVIKGTKKEQVEQIIKDIREFKEKNKVDKIVVLWTANTERYSNVCAGLNDTMENLLASVDKNEAEVSPSTLYAIACVMEGVPFINGSPQNTFVPGLIDLAIKNNCLIGGDDFKSGQTKMKSVLVDFLVGAGIKPTSIVSYNHLGNNDGMNLSAPQAFRSKEISKSNVVDDMVSSNAILYEPGEHPDHVVVIKYVPYVGDSKRAMDEYTSEIFMGGKNTIVLHNTCEDSLLAAPIILDLVLLAELSTRIQLKAEGEDKFHSFHPVATILSYLTKAPLVPPGTPVVNALAKQRAMLENIMRACVGLAPENNMILEYK</sequence>
<name>INO1_MAIZE</name>
<accession>Q9FPK7</accession>
<accession>O65196</accession>
<evidence type="ECO:0000250" key="1">
    <source>
        <dbReference type="UniProtKB" id="P11986"/>
    </source>
</evidence>
<evidence type="ECO:0000250" key="2">
    <source>
        <dbReference type="UniProtKB" id="P42801"/>
    </source>
</evidence>
<evidence type="ECO:0000305" key="3"/>
<protein>
    <recommendedName>
        <fullName>Inositol-3-phosphate synthase</fullName>
        <shortName>MIP synthase</shortName>
        <ecNumber evidence="2">5.5.1.4</ecNumber>
    </recommendedName>
    <alternativeName>
        <fullName>Myo-inositol 1-phosphate synthase</fullName>
        <shortName>IPS</shortName>
        <shortName>MI-1-P synthase</shortName>
    </alternativeName>
</protein>
<feature type="chain" id="PRO_0000195192" description="Inositol-3-phosphate synthase">
    <location>
        <begin position="1"/>
        <end position="510"/>
    </location>
</feature>
<feature type="binding site" evidence="1">
    <location>
        <position position="70"/>
    </location>
    <ligand>
        <name>NAD(+)</name>
        <dbReference type="ChEBI" id="CHEBI:57540"/>
    </ligand>
</feature>
<feature type="binding site" evidence="1">
    <location>
        <position position="71"/>
    </location>
    <ligand>
        <name>NAD(+)</name>
        <dbReference type="ChEBI" id="CHEBI:57540"/>
    </ligand>
</feature>
<feature type="binding site" evidence="1">
    <location>
        <position position="72"/>
    </location>
    <ligand>
        <name>NAD(+)</name>
        <dbReference type="ChEBI" id="CHEBI:57540"/>
    </ligand>
</feature>
<feature type="binding site" evidence="1">
    <location>
        <position position="73"/>
    </location>
    <ligand>
        <name>NAD(+)</name>
        <dbReference type="ChEBI" id="CHEBI:57540"/>
    </ligand>
</feature>
<feature type="binding site" evidence="1">
    <location>
        <position position="143"/>
    </location>
    <ligand>
        <name>NAD(+)</name>
        <dbReference type="ChEBI" id="CHEBI:57540"/>
    </ligand>
</feature>
<feature type="binding site" evidence="1">
    <location>
        <position position="180"/>
    </location>
    <ligand>
        <name>NAD(+)</name>
        <dbReference type="ChEBI" id="CHEBI:57540"/>
    </ligand>
</feature>
<feature type="binding site" evidence="1">
    <location>
        <position position="190"/>
    </location>
    <ligand>
        <name>NAD(+)</name>
        <dbReference type="ChEBI" id="CHEBI:57540"/>
    </ligand>
</feature>
<feature type="binding site" evidence="1">
    <location>
        <position position="193"/>
    </location>
    <ligand>
        <name>NAD(+)</name>
        <dbReference type="ChEBI" id="CHEBI:57540"/>
    </ligand>
</feature>
<feature type="binding site" evidence="1">
    <location>
        <position position="230"/>
    </location>
    <ligand>
        <name>NAD(+)</name>
        <dbReference type="ChEBI" id="CHEBI:57540"/>
    </ligand>
</feature>
<feature type="binding site" evidence="1">
    <location>
        <position position="231"/>
    </location>
    <ligand>
        <name>NAD(+)</name>
        <dbReference type="ChEBI" id="CHEBI:57540"/>
    </ligand>
</feature>
<feature type="binding site" evidence="1">
    <location>
        <position position="232"/>
    </location>
    <ligand>
        <name>NAD(+)</name>
        <dbReference type="ChEBI" id="CHEBI:57540"/>
    </ligand>
</feature>
<feature type="binding site" evidence="1">
    <location>
        <position position="233"/>
    </location>
    <ligand>
        <name>NAD(+)</name>
        <dbReference type="ChEBI" id="CHEBI:57540"/>
    </ligand>
</feature>
<feature type="binding site" evidence="1">
    <location>
        <position position="281"/>
    </location>
    <ligand>
        <name>NAD(+)</name>
        <dbReference type="ChEBI" id="CHEBI:57540"/>
    </ligand>
</feature>
<feature type="binding site" evidence="1">
    <location>
        <position position="282"/>
    </location>
    <ligand>
        <name>NAD(+)</name>
        <dbReference type="ChEBI" id="CHEBI:57540"/>
    </ligand>
</feature>
<feature type="binding site" evidence="1">
    <location>
        <position position="306"/>
    </location>
    <ligand>
        <name>NAD(+)</name>
        <dbReference type="ChEBI" id="CHEBI:57540"/>
    </ligand>
</feature>
<feature type="binding site" evidence="1">
    <location>
        <position position="309"/>
    </location>
    <ligand>
        <name>NAD(+)</name>
        <dbReference type="ChEBI" id="CHEBI:57540"/>
    </ligand>
</feature>
<feature type="binding site" evidence="1">
    <location>
        <position position="340"/>
    </location>
    <ligand>
        <name>NAD(+)</name>
        <dbReference type="ChEBI" id="CHEBI:57540"/>
    </ligand>
</feature>
<feature type="binding site" evidence="1">
    <location>
        <position position="341"/>
    </location>
    <ligand>
        <name>NAD(+)</name>
        <dbReference type="ChEBI" id="CHEBI:57540"/>
    </ligand>
</feature>
<feature type="binding site" evidence="1">
    <location>
        <position position="342"/>
    </location>
    <ligand>
        <name>NAD(+)</name>
        <dbReference type="ChEBI" id="CHEBI:57540"/>
    </ligand>
</feature>
<feature type="binding site" evidence="1">
    <location>
        <position position="355"/>
    </location>
    <ligand>
        <name>NAD(+)</name>
        <dbReference type="ChEBI" id="CHEBI:57540"/>
    </ligand>
</feature>
<feature type="binding site" evidence="1">
    <location>
        <position position="393"/>
    </location>
    <ligand>
        <name>NAD(+)</name>
        <dbReference type="ChEBI" id="CHEBI:57540"/>
    </ligand>
</feature>
<feature type="binding site" evidence="1">
    <location>
        <position position="394"/>
    </location>
    <ligand>
        <name>NAD(+)</name>
        <dbReference type="ChEBI" id="CHEBI:57540"/>
    </ligand>
</feature>
<feature type="binding site" evidence="1">
    <location>
        <position position="422"/>
    </location>
    <ligand>
        <name>NAD(+)</name>
        <dbReference type="ChEBI" id="CHEBI:57540"/>
    </ligand>
</feature>
<feature type="binding site" evidence="1">
    <location>
        <position position="423"/>
    </location>
    <ligand>
        <name>NAD(+)</name>
        <dbReference type="ChEBI" id="CHEBI:57540"/>
    </ligand>
</feature>
<feature type="sequence conflict" description="In Ref. 2; AAG40328." evidence="3" ref="2">
    <original>M</original>
    <variation>T</variation>
    <location>
        <position position="18"/>
    </location>
</feature>
<feature type="sequence conflict" description="In Ref. 2; AAG40328." evidence="3" ref="2">
    <original>A</original>
    <variation>T</variation>
    <location>
        <position position="351"/>
    </location>
</feature>
<keyword id="KW-0963">Cytoplasm</keyword>
<keyword id="KW-0398">Inositol biosynthesis</keyword>
<keyword id="KW-0413">Isomerase</keyword>
<keyword id="KW-0444">Lipid biosynthesis</keyword>
<keyword id="KW-0443">Lipid metabolism</keyword>
<keyword id="KW-0520">NAD</keyword>
<keyword id="KW-0539">Nucleus</keyword>
<keyword id="KW-0594">Phospholipid biosynthesis</keyword>
<keyword id="KW-1208">Phospholipid metabolism</keyword>
<keyword id="KW-1185">Reference proteome</keyword>
<reference key="1">
    <citation type="submission" date="1998-03" db="EMBL/GenBank/DDBJ databases">
        <title>Linkage mapping maize and barley myo-inositol 1-phosphate synthase genes.</title>
        <authorList>
            <person name="Larson S.R."/>
            <person name="Raboy V."/>
        </authorList>
    </citation>
    <scope>NUCLEOTIDE SEQUENCE</scope>
    <source>
        <strain>cv. Early ACR</strain>
        <tissue>Leaf</tissue>
    </source>
</reference>
<reference key="2">
    <citation type="submission" date="2000-11" db="EMBL/GenBank/DDBJ databases">
        <title>Genomic sequence of maize myo-inositol 1-phosphate synthase gene.</title>
        <authorList>
            <person name="Shukla S."/>
            <person name="VanToai T.T."/>
        </authorList>
    </citation>
    <scope>NUCLEOTIDE SEQUENCE [GENOMIC DNA]</scope>
</reference>
<proteinExistence type="evidence at transcript level"/>